<organism>
    <name type="scientific">Mus musculus</name>
    <name type="common">Mouse</name>
    <dbReference type="NCBI Taxonomy" id="10090"/>
    <lineage>
        <taxon>Eukaryota</taxon>
        <taxon>Metazoa</taxon>
        <taxon>Chordata</taxon>
        <taxon>Craniata</taxon>
        <taxon>Vertebrata</taxon>
        <taxon>Euteleostomi</taxon>
        <taxon>Mammalia</taxon>
        <taxon>Eutheria</taxon>
        <taxon>Euarchontoglires</taxon>
        <taxon>Glires</taxon>
        <taxon>Rodentia</taxon>
        <taxon>Myomorpha</taxon>
        <taxon>Muroidea</taxon>
        <taxon>Muridae</taxon>
        <taxon>Murinae</taxon>
        <taxon>Mus</taxon>
        <taxon>Mus</taxon>
    </lineage>
</organism>
<sequence length="59" mass="6734">MEEPTPEPVYVDVDKGLTLACFVFLCLFLVVMIIRCAKVIMDPYSAIPTSTWEEQHLDD</sequence>
<feature type="chain" id="PRO_0000442853" description="Cortexin domain-containing 1 protein">
    <location>
        <begin position="1"/>
        <end position="59"/>
    </location>
</feature>
<feature type="transmembrane region" description="Helical" evidence="1">
    <location>
        <begin position="17"/>
        <end position="37"/>
    </location>
</feature>
<keyword id="KW-0472">Membrane</keyword>
<keyword id="KW-1185">Reference proteome</keyword>
<keyword id="KW-0812">Transmembrane</keyword>
<keyword id="KW-1133">Transmembrane helix</keyword>
<gene>
    <name evidence="2" type="primary">Ctxnd1</name>
</gene>
<evidence type="ECO:0000255" key="1"/>
<evidence type="ECO:0000312" key="2">
    <source>
        <dbReference type="MGI" id="MGI:3780284"/>
    </source>
</evidence>
<protein>
    <recommendedName>
        <fullName evidence="2">Cortexin domain-containing 1 protein</fullName>
    </recommendedName>
</protein>
<accession>A0A1B0GST9</accession>
<comment type="subcellular location">
    <subcellularLocation>
        <location evidence="1">Membrane</location>
        <topology evidence="1">Single-pass membrane protein</topology>
    </subcellularLocation>
</comment>
<proteinExistence type="inferred from homology"/>
<name>CTXD1_MOUSE</name>
<dbReference type="EMBL" id="AK137174">
    <property type="status" value="NOT_ANNOTATED_CDS"/>
    <property type="molecule type" value="mRNA"/>
</dbReference>
<dbReference type="EMBL" id="AC129605">
    <property type="status" value="NOT_ANNOTATED_CDS"/>
    <property type="molecule type" value="Genomic_DNA"/>
</dbReference>
<dbReference type="RefSeq" id="NP_001371117.1">
    <property type="nucleotide sequence ID" value="NM_001384188.1"/>
</dbReference>
<dbReference type="SMR" id="A0A1B0GST9"/>
<dbReference type="FunCoup" id="A0A1B0GST9">
    <property type="interactions" value="1"/>
</dbReference>
<dbReference type="STRING" id="10090.ENSMUSP00000148068"/>
<dbReference type="Ensembl" id="ENSMUST00000180387.3">
    <property type="protein sequence ID" value="ENSMUSP00000148068.2"/>
    <property type="gene ID" value="ENSMUSG00000097789.3"/>
</dbReference>
<dbReference type="GeneID" id="100039239"/>
<dbReference type="AGR" id="MGI:3780284"/>
<dbReference type="MGI" id="MGI:3780284">
    <property type="gene designation" value="Ctxnd1"/>
</dbReference>
<dbReference type="VEuPathDB" id="HostDB:ENSMUSG00000097789"/>
<dbReference type="GeneTree" id="ENSGT00960000186669"/>
<dbReference type="InParanoid" id="A0A1B0GST9"/>
<dbReference type="OMA" id="WIVSIME"/>
<dbReference type="PRO" id="PR:A0A1B0GST9"/>
<dbReference type="Proteomes" id="UP000000589">
    <property type="component" value="Chromosome 7"/>
</dbReference>
<dbReference type="RNAct" id="A0A1B0GST9">
    <property type="molecule type" value="protein"/>
</dbReference>
<dbReference type="Bgee" id="ENSMUSG00000097789">
    <property type="expression patterns" value="Expressed in lumbar dorsal root ganglion and 64 other cell types or tissues"/>
</dbReference>
<dbReference type="GO" id="GO:0016020">
    <property type="term" value="C:membrane"/>
    <property type="evidence" value="ECO:0007669"/>
    <property type="project" value="UniProtKB-SubCell"/>
</dbReference>
<dbReference type="InterPro" id="IPR020066">
    <property type="entry name" value="Cortexin"/>
</dbReference>
<dbReference type="PANTHER" id="PTHR16736:SF5">
    <property type="entry name" value="CORTEXIN DOMAIN-CONTAINING 1 PROTEIN"/>
    <property type="match status" value="1"/>
</dbReference>
<dbReference type="PANTHER" id="PTHR16736">
    <property type="entry name" value="CORTEXIN-1-RELATED"/>
    <property type="match status" value="1"/>
</dbReference>
<dbReference type="Pfam" id="PF11057">
    <property type="entry name" value="Cortexin"/>
    <property type="match status" value="1"/>
</dbReference>
<reference key="1">
    <citation type="journal article" date="2005" name="Science">
        <title>The transcriptional landscape of the mammalian genome.</title>
        <authorList>
            <person name="Carninci P."/>
            <person name="Kasukawa T."/>
            <person name="Katayama S."/>
            <person name="Gough J."/>
            <person name="Frith M.C."/>
            <person name="Maeda N."/>
            <person name="Oyama R."/>
            <person name="Ravasi T."/>
            <person name="Lenhard B."/>
            <person name="Wells C."/>
            <person name="Kodzius R."/>
            <person name="Shimokawa K."/>
            <person name="Bajic V.B."/>
            <person name="Brenner S.E."/>
            <person name="Batalov S."/>
            <person name="Forrest A.R."/>
            <person name="Zavolan M."/>
            <person name="Davis M.J."/>
            <person name="Wilming L.G."/>
            <person name="Aidinis V."/>
            <person name="Allen J.E."/>
            <person name="Ambesi-Impiombato A."/>
            <person name="Apweiler R."/>
            <person name="Aturaliya R.N."/>
            <person name="Bailey T.L."/>
            <person name="Bansal M."/>
            <person name="Baxter L."/>
            <person name="Beisel K.W."/>
            <person name="Bersano T."/>
            <person name="Bono H."/>
            <person name="Chalk A.M."/>
            <person name="Chiu K.P."/>
            <person name="Choudhary V."/>
            <person name="Christoffels A."/>
            <person name="Clutterbuck D.R."/>
            <person name="Crowe M.L."/>
            <person name="Dalla E."/>
            <person name="Dalrymple B.P."/>
            <person name="de Bono B."/>
            <person name="Della Gatta G."/>
            <person name="di Bernardo D."/>
            <person name="Down T."/>
            <person name="Engstrom P."/>
            <person name="Fagiolini M."/>
            <person name="Faulkner G."/>
            <person name="Fletcher C.F."/>
            <person name="Fukushima T."/>
            <person name="Furuno M."/>
            <person name="Futaki S."/>
            <person name="Gariboldi M."/>
            <person name="Georgii-Hemming P."/>
            <person name="Gingeras T.R."/>
            <person name="Gojobori T."/>
            <person name="Green R.E."/>
            <person name="Gustincich S."/>
            <person name="Harbers M."/>
            <person name="Hayashi Y."/>
            <person name="Hensch T.K."/>
            <person name="Hirokawa N."/>
            <person name="Hill D."/>
            <person name="Huminiecki L."/>
            <person name="Iacono M."/>
            <person name="Ikeo K."/>
            <person name="Iwama A."/>
            <person name="Ishikawa T."/>
            <person name="Jakt M."/>
            <person name="Kanapin A."/>
            <person name="Katoh M."/>
            <person name="Kawasawa Y."/>
            <person name="Kelso J."/>
            <person name="Kitamura H."/>
            <person name="Kitano H."/>
            <person name="Kollias G."/>
            <person name="Krishnan S.P."/>
            <person name="Kruger A."/>
            <person name="Kummerfeld S.K."/>
            <person name="Kurochkin I.V."/>
            <person name="Lareau L.F."/>
            <person name="Lazarevic D."/>
            <person name="Lipovich L."/>
            <person name="Liu J."/>
            <person name="Liuni S."/>
            <person name="McWilliam S."/>
            <person name="Madan Babu M."/>
            <person name="Madera M."/>
            <person name="Marchionni L."/>
            <person name="Matsuda H."/>
            <person name="Matsuzawa S."/>
            <person name="Miki H."/>
            <person name="Mignone F."/>
            <person name="Miyake S."/>
            <person name="Morris K."/>
            <person name="Mottagui-Tabar S."/>
            <person name="Mulder N."/>
            <person name="Nakano N."/>
            <person name="Nakauchi H."/>
            <person name="Ng P."/>
            <person name="Nilsson R."/>
            <person name="Nishiguchi S."/>
            <person name="Nishikawa S."/>
            <person name="Nori F."/>
            <person name="Ohara O."/>
            <person name="Okazaki Y."/>
            <person name="Orlando V."/>
            <person name="Pang K.C."/>
            <person name="Pavan W.J."/>
            <person name="Pavesi G."/>
            <person name="Pesole G."/>
            <person name="Petrovsky N."/>
            <person name="Piazza S."/>
            <person name="Reed J."/>
            <person name="Reid J.F."/>
            <person name="Ring B.Z."/>
            <person name="Ringwald M."/>
            <person name="Rost B."/>
            <person name="Ruan Y."/>
            <person name="Salzberg S.L."/>
            <person name="Sandelin A."/>
            <person name="Schneider C."/>
            <person name="Schoenbach C."/>
            <person name="Sekiguchi K."/>
            <person name="Semple C.A."/>
            <person name="Seno S."/>
            <person name="Sessa L."/>
            <person name="Sheng Y."/>
            <person name="Shibata Y."/>
            <person name="Shimada H."/>
            <person name="Shimada K."/>
            <person name="Silva D."/>
            <person name="Sinclair B."/>
            <person name="Sperling S."/>
            <person name="Stupka E."/>
            <person name="Sugiura K."/>
            <person name="Sultana R."/>
            <person name="Takenaka Y."/>
            <person name="Taki K."/>
            <person name="Tammoja K."/>
            <person name="Tan S.L."/>
            <person name="Tang S."/>
            <person name="Taylor M.S."/>
            <person name="Tegner J."/>
            <person name="Teichmann S.A."/>
            <person name="Ueda H.R."/>
            <person name="van Nimwegen E."/>
            <person name="Verardo R."/>
            <person name="Wei C.L."/>
            <person name="Yagi K."/>
            <person name="Yamanishi H."/>
            <person name="Zabarovsky E."/>
            <person name="Zhu S."/>
            <person name="Zimmer A."/>
            <person name="Hide W."/>
            <person name="Bult C."/>
            <person name="Grimmond S.M."/>
            <person name="Teasdale R.D."/>
            <person name="Liu E.T."/>
            <person name="Brusic V."/>
            <person name="Quackenbush J."/>
            <person name="Wahlestedt C."/>
            <person name="Mattick J.S."/>
            <person name="Hume D.A."/>
            <person name="Kai C."/>
            <person name="Sasaki D."/>
            <person name="Tomaru Y."/>
            <person name="Fukuda S."/>
            <person name="Kanamori-Katayama M."/>
            <person name="Suzuki M."/>
            <person name="Aoki J."/>
            <person name="Arakawa T."/>
            <person name="Iida J."/>
            <person name="Imamura K."/>
            <person name="Itoh M."/>
            <person name="Kato T."/>
            <person name="Kawaji H."/>
            <person name="Kawagashira N."/>
            <person name="Kawashima T."/>
            <person name="Kojima M."/>
            <person name="Kondo S."/>
            <person name="Konno H."/>
            <person name="Nakano K."/>
            <person name="Ninomiya N."/>
            <person name="Nishio T."/>
            <person name="Okada M."/>
            <person name="Plessy C."/>
            <person name="Shibata K."/>
            <person name="Shiraki T."/>
            <person name="Suzuki S."/>
            <person name="Tagami M."/>
            <person name="Waki K."/>
            <person name="Watahiki A."/>
            <person name="Okamura-Oho Y."/>
            <person name="Suzuki H."/>
            <person name="Kawai J."/>
            <person name="Hayashizaki Y."/>
        </authorList>
    </citation>
    <scope>NUCLEOTIDE SEQUENCE [LARGE SCALE MRNA]</scope>
</reference>
<reference key="2">
    <citation type="journal article" date="2009" name="PLoS Biol.">
        <title>Lineage-specific biology revealed by a finished genome assembly of the mouse.</title>
        <authorList>
            <person name="Church D.M."/>
            <person name="Goodstadt L."/>
            <person name="Hillier L.W."/>
            <person name="Zody M.C."/>
            <person name="Goldstein S."/>
            <person name="She X."/>
            <person name="Bult C.J."/>
            <person name="Agarwala R."/>
            <person name="Cherry J.L."/>
            <person name="DiCuccio M."/>
            <person name="Hlavina W."/>
            <person name="Kapustin Y."/>
            <person name="Meric P."/>
            <person name="Maglott D."/>
            <person name="Birtle Z."/>
            <person name="Marques A.C."/>
            <person name="Graves T."/>
            <person name="Zhou S."/>
            <person name="Teague B."/>
            <person name="Potamousis K."/>
            <person name="Churas C."/>
            <person name="Place M."/>
            <person name="Herschleb J."/>
            <person name="Runnheim R."/>
            <person name="Forrest D."/>
            <person name="Amos-Landgraf J."/>
            <person name="Schwartz D.C."/>
            <person name="Cheng Z."/>
            <person name="Lindblad-Toh K."/>
            <person name="Eichler E.E."/>
            <person name="Ponting C.P."/>
        </authorList>
    </citation>
    <scope>NUCLEOTIDE SEQUENCE [LARGE SCALE GENOMIC DNA]</scope>
    <source>
        <strain>C57BL/6J</strain>
    </source>
</reference>